<accession>A0A7H0DN82</accession>
<gene>
    <name type="primary">OPG110</name>
    <name type="ORF">MPXVgp095</name>
</gene>
<proteinExistence type="evidence at protein level"/>
<protein>
    <recommendedName>
        <fullName>Late transcription elongation factor OPG110</fullName>
    </recommendedName>
</protein>
<reference key="1">
    <citation type="journal article" date="2022" name="J. Infect. Dis.">
        <title>Exportation of Monkeypox virus from the African continent.</title>
        <authorList>
            <person name="Mauldin M.R."/>
            <person name="McCollum A.M."/>
            <person name="Nakazawa Y.J."/>
            <person name="Mandra A."/>
            <person name="Whitehouse E.R."/>
            <person name="Davidson W."/>
            <person name="Zhao H."/>
            <person name="Gao J."/>
            <person name="Li Y."/>
            <person name="Doty J."/>
            <person name="Yinka-Ogunleye A."/>
            <person name="Akinpelu A."/>
            <person name="Aruna O."/>
            <person name="Naidoo D."/>
            <person name="Lewandowski K."/>
            <person name="Afrough B."/>
            <person name="Graham V."/>
            <person name="Aarons E."/>
            <person name="Hewson R."/>
            <person name="Vipond R."/>
            <person name="Dunning J."/>
            <person name="Chand M."/>
            <person name="Brown C."/>
            <person name="Cohen-Gihon I."/>
            <person name="Erez N."/>
            <person name="Shifman O."/>
            <person name="Israeli O."/>
            <person name="Sharon M."/>
            <person name="Schwartz E."/>
            <person name="Beth-Din A."/>
            <person name="Zvi A."/>
            <person name="Mak T.M."/>
            <person name="Ng Y.K."/>
            <person name="Cui L."/>
            <person name="Lin R.T.P."/>
            <person name="Olson V.A."/>
            <person name="Brooks T."/>
            <person name="Paran N."/>
            <person name="Ihekweazu C."/>
            <person name="Reynolds M.G."/>
        </authorList>
    </citation>
    <scope>NUCLEOTIDE SEQUENCE [LARGE SCALE GENOMIC DNA]</scope>
    <source>
        <strain>MPXV-M5312_HM12_Rivers</strain>
    </source>
</reference>
<keyword id="KW-0002">3D-structure</keyword>
<keyword id="KW-1035">Host cytoplasm</keyword>
<keyword id="KW-1185">Reference proteome</keyword>
<keyword id="KW-0946">Virion</keyword>
<name>PG110_MONPV</name>
<feature type="chain" id="PRO_0000457422" description="Late transcription elongation factor OPG110">
    <location>
        <begin position="1"/>
        <end position="210"/>
    </location>
</feature>
<feature type="region of interest" description="Disordered" evidence="2">
    <location>
        <begin position="25"/>
        <end position="102"/>
    </location>
</feature>
<feature type="compositionally biased region" description="Basic and acidic residues" evidence="2">
    <location>
        <begin position="25"/>
        <end position="36"/>
    </location>
</feature>
<feature type="compositionally biased region" description="Basic residues" evidence="2">
    <location>
        <begin position="49"/>
        <end position="68"/>
    </location>
</feature>
<feature type="strand" evidence="4">
    <location>
        <begin position="138"/>
        <end position="140"/>
    </location>
</feature>
<feature type="helix" evidence="4">
    <location>
        <begin position="143"/>
        <end position="173"/>
    </location>
</feature>
<feature type="helix" evidence="4">
    <location>
        <begin position="180"/>
        <end position="197"/>
    </location>
</feature>
<feature type="turn" evidence="4">
    <location>
        <begin position="198"/>
        <end position="200"/>
    </location>
</feature>
<comment type="function">
    <text evidence="1">Involved in the co-transcriptional or post-transcriptional endoribonucleolytic cleavage that generates sequence-homogeneous 3' ends during late transcription. Involved in postreplicative transcription elongation on intermediate and late genes. Also involved in DNA replication and in multiple steps of virion morphogenesis. Required both for inclusion of virosoplasm into crescents as well as for maturation of immature virions (IV) into mature virions (MV).</text>
</comment>
<comment type="subunit">
    <text evidence="1">Interacts with the DNA polymerase processivity factor A20. Interacts with B1R kinase. Interacts with the late transcription factors VLTF-1 and VLTF-3. Interacts with the late transcription elongation factor G2. Interacts with itself. Might be part of a transcription complex composed at least of G2, A18, and H5.</text>
</comment>
<comment type="subcellular location">
    <subcellularLocation>
        <location evidence="1">Virion</location>
    </subcellularLocation>
    <subcellularLocation>
        <location evidence="1">Host cytoplasm</location>
    </subcellularLocation>
    <text evidence="1">Early during viral infection, diffusely localizes within the cytoplasm. Following DNA replication, localizes specifically to virus factories.</text>
</comment>
<comment type="PTM">
    <text evidence="1">Phosphorylated at multiple sites. Phosphorylation is necessary for cleavage activity. Phosphorylated by the viral B1R and F10 kinases.</text>
</comment>
<comment type="similarity">
    <text evidence="3">Belongs to the orthopoxvirus OPG110 family.</text>
</comment>
<evidence type="ECO:0000250" key="1">
    <source>
        <dbReference type="UniProtKB" id="P07242"/>
    </source>
</evidence>
<evidence type="ECO:0000256" key="2">
    <source>
        <dbReference type="SAM" id="MobiDB-lite"/>
    </source>
</evidence>
<evidence type="ECO:0000305" key="3"/>
<evidence type="ECO:0007829" key="4">
    <source>
        <dbReference type="PDB" id="8WPE"/>
    </source>
</evidence>
<sequence length="210" mass="23069">MAWSITNKADTSSFTKMAEIRAHLRNSAENKDKNEDIFPEDVIIPSTKPKTKRTTTPRKPAATKRSTKKDKEKEEVEEVVIEEYHQTTEENSPPPSSSPGVGDIVESVAAVELDDSDGDDEPMVQVEAGKVNHSARSDLSDLKVATDNIVKDLKKIITRISAVSTVLEDVQAAGISRQFTSMTKAITTLSDLVTEGKSKVVRKKVKTCKK</sequence>
<organismHost>
    <name type="scientific">Cynomys gunnisoni</name>
    <name type="common">Gunnison's prairie dog</name>
    <name type="synonym">Spermophilus gunnisoni</name>
    <dbReference type="NCBI Taxonomy" id="45479"/>
</organismHost>
<organismHost>
    <name type="scientific">Cynomys leucurus</name>
    <name type="common">White-tailed prairie dog</name>
    <dbReference type="NCBI Taxonomy" id="99825"/>
</organismHost>
<organismHost>
    <name type="scientific">Cynomys ludovicianus</name>
    <name type="common">Black-tailed prairie dog</name>
    <dbReference type="NCBI Taxonomy" id="45480"/>
</organismHost>
<organismHost>
    <name type="scientific">Cynomys mexicanus</name>
    <name type="common">Mexican prairie dog</name>
    <dbReference type="NCBI Taxonomy" id="99826"/>
</organismHost>
<organismHost>
    <name type="scientific">Cynomys parvidens</name>
    <name type="common">Utah prairie dog</name>
    <dbReference type="NCBI Taxonomy" id="99827"/>
</organismHost>
<organismHost>
    <name type="scientific">Gliridae</name>
    <name type="common">dormice</name>
    <dbReference type="NCBI Taxonomy" id="30650"/>
</organismHost>
<organismHost>
    <name type="scientific">Heliosciurus ruwenzorii</name>
    <name type="common">Ruwenzori sun squirrel</name>
    <dbReference type="NCBI Taxonomy" id="226685"/>
</organismHost>
<organismHost>
    <name type="scientific">Homo sapiens</name>
    <name type="common">Human</name>
    <dbReference type="NCBI Taxonomy" id="9606"/>
</organismHost>
<organismHost>
    <name type="scientific">Mus musculus</name>
    <name type="common">Mouse</name>
    <dbReference type="NCBI Taxonomy" id="10090"/>
</organismHost>
<dbReference type="EMBL" id="MT903340">
    <property type="protein sequence ID" value="QNP12965.1"/>
    <property type="molecule type" value="Genomic_DNA"/>
</dbReference>
<dbReference type="RefSeq" id="YP_010377092.1">
    <property type="nucleotide sequence ID" value="NC_063383.1"/>
</dbReference>
<dbReference type="PDB" id="8WPE">
    <property type="method" value="EM"/>
    <property type="resolution" value="2.70 A"/>
    <property type="chains" value="D/E/F/G=1-210"/>
</dbReference>
<dbReference type="PDB" id="8WPF">
    <property type="method" value="EM"/>
    <property type="resolution" value="3.00 A"/>
    <property type="chains" value="D/E/F/G=1-210"/>
</dbReference>
<dbReference type="PDB" id="8WPK">
    <property type="method" value="EM"/>
    <property type="resolution" value="2.70 A"/>
    <property type="chains" value="D/E/F/G=1-210"/>
</dbReference>
<dbReference type="PDB" id="8WPP">
    <property type="method" value="EM"/>
    <property type="resolution" value="3.10 A"/>
    <property type="chains" value="D/E/F/G=1-210"/>
</dbReference>
<dbReference type="PDBsum" id="8WPE"/>
<dbReference type="PDBsum" id="8WPF"/>
<dbReference type="PDBsum" id="8WPK"/>
<dbReference type="PDBsum" id="8WPP"/>
<dbReference type="EMDB" id="EMD-37714"/>
<dbReference type="EMDB" id="EMD-37715"/>
<dbReference type="EMDB" id="EMD-37717"/>
<dbReference type="EMDB" id="EMD-37722"/>
<dbReference type="SMR" id="A0A7H0DN82"/>
<dbReference type="GeneID" id="72551505"/>
<dbReference type="Proteomes" id="UP000516359">
    <property type="component" value="Genome"/>
</dbReference>
<dbReference type="GO" id="GO:0030430">
    <property type="term" value="C:host cell cytoplasm"/>
    <property type="evidence" value="ECO:0007669"/>
    <property type="project" value="UniProtKB-SubCell"/>
</dbReference>
<dbReference type="GO" id="GO:0019031">
    <property type="term" value="C:viral envelope"/>
    <property type="evidence" value="ECO:0007669"/>
    <property type="project" value="InterPro"/>
</dbReference>
<dbReference type="InterPro" id="IPR004966">
    <property type="entry name" value="Pox_Ag35"/>
</dbReference>
<dbReference type="Pfam" id="PF03286">
    <property type="entry name" value="Pox_Ag35"/>
    <property type="match status" value="1"/>
</dbReference>
<organism>
    <name type="scientific">Monkeypox virus</name>
    <dbReference type="NCBI Taxonomy" id="10244"/>
    <lineage>
        <taxon>Viruses</taxon>
        <taxon>Varidnaviria</taxon>
        <taxon>Bamfordvirae</taxon>
        <taxon>Nucleocytoviricota</taxon>
        <taxon>Pokkesviricetes</taxon>
        <taxon>Chitovirales</taxon>
        <taxon>Poxviridae</taxon>
        <taxon>Chordopoxvirinae</taxon>
        <taxon>Orthopoxvirus</taxon>
    </lineage>
</organism>